<evidence type="ECO:0000250" key="1"/>
<evidence type="ECO:0000305" key="2"/>
<proteinExistence type="evidence at protein level"/>
<name>MZT1_XENLA</name>
<feature type="chain" id="PRO_0000337017" description="Mitotic-spindle organizing protein 1">
    <location>
        <begin position="1"/>
        <end position="72"/>
    </location>
</feature>
<organism>
    <name type="scientific">Xenopus laevis</name>
    <name type="common">African clawed frog</name>
    <dbReference type="NCBI Taxonomy" id="8355"/>
    <lineage>
        <taxon>Eukaryota</taxon>
        <taxon>Metazoa</taxon>
        <taxon>Chordata</taxon>
        <taxon>Craniata</taxon>
        <taxon>Vertebrata</taxon>
        <taxon>Euteleostomi</taxon>
        <taxon>Amphibia</taxon>
        <taxon>Batrachia</taxon>
        <taxon>Anura</taxon>
        <taxon>Pipoidea</taxon>
        <taxon>Pipidae</taxon>
        <taxon>Xenopodinae</taxon>
        <taxon>Xenopus</taxon>
        <taxon>Xenopus</taxon>
    </lineage>
</organism>
<dbReference type="EMBL" id="BC085033">
    <property type="protein sequence ID" value="AAH85033.1"/>
    <property type="status" value="ALT_INIT"/>
    <property type="molecule type" value="mRNA"/>
</dbReference>
<dbReference type="RefSeq" id="NP_001165186.1">
    <property type="nucleotide sequence ID" value="NM_001171715.1"/>
</dbReference>
<dbReference type="PDB" id="9EOJ">
    <property type="method" value="EM"/>
    <property type="resolution" value="17.00 A"/>
    <property type="chains" value="B/D=1-72"/>
</dbReference>
<dbReference type="PDBsum" id="9EOJ"/>
<dbReference type="EMDB" id="EMD-19861"/>
<dbReference type="SMR" id="Q5U4M5"/>
<dbReference type="DNASU" id="495466"/>
<dbReference type="GeneID" id="495466"/>
<dbReference type="KEGG" id="xla:495466"/>
<dbReference type="AGR" id="Xenbase:XB-GENE-6253829"/>
<dbReference type="CTD" id="495466"/>
<dbReference type="Xenbase" id="XB-GENE-6253829">
    <property type="gene designation" value="mzt1.S"/>
</dbReference>
<dbReference type="Proteomes" id="UP000186698">
    <property type="component" value="Chromosome 2S"/>
</dbReference>
<dbReference type="Bgee" id="495466">
    <property type="expression patterns" value="Expressed in muscle tissue and 19 other cell types or tissues"/>
</dbReference>
<dbReference type="GO" id="GO:0005813">
    <property type="term" value="C:centrosome"/>
    <property type="evidence" value="ECO:0000250"/>
    <property type="project" value="UniProtKB"/>
</dbReference>
<dbReference type="GO" id="GO:0005737">
    <property type="term" value="C:cytoplasm"/>
    <property type="evidence" value="ECO:0007669"/>
    <property type="project" value="UniProtKB-KW"/>
</dbReference>
<dbReference type="GO" id="GO:0000931">
    <property type="term" value="C:gamma-tubulin ring complex"/>
    <property type="evidence" value="ECO:0000250"/>
    <property type="project" value="UniProtKB"/>
</dbReference>
<dbReference type="GO" id="GO:0031021">
    <property type="term" value="C:interphase microtubule organizing center"/>
    <property type="evidence" value="ECO:0000318"/>
    <property type="project" value="GO_Central"/>
</dbReference>
<dbReference type="GO" id="GO:0005819">
    <property type="term" value="C:spindle"/>
    <property type="evidence" value="ECO:0000250"/>
    <property type="project" value="UniProtKB"/>
</dbReference>
<dbReference type="GO" id="GO:0033566">
    <property type="term" value="P:gamma-tubulin complex localization"/>
    <property type="evidence" value="ECO:0000250"/>
    <property type="project" value="UniProtKB"/>
</dbReference>
<dbReference type="GO" id="GO:0051415">
    <property type="term" value="P:microtubule nucleation by interphase microtubule organizing center"/>
    <property type="evidence" value="ECO:0000318"/>
    <property type="project" value="GO_Central"/>
</dbReference>
<dbReference type="GO" id="GO:0090307">
    <property type="term" value="P:mitotic spindle assembly"/>
    <property type="evidence" value="ECO:0000318"/>
    <property type="project" value="GO_Central"/>
</dbReference>
<dbReference type="InterPro" id="IPR022214">
    <property type="entry name" value="MZT1"/>
</dbReference>
<dbReference type="PANTHER" id="PTHR28520">
    <property type="entry name" value="MITOTIC-SPINDLE ORGANIZING PROTEIN 1"/>
    <property type="match status" value="1"/>
</dbReference>
<dbReference type="PANTHER" id="PTHR28520:SF2">
    <property type="entry name" value="MITOTIC-SPINDLE ORGANIZING PROTEIN 1"/>
    <property type="match status" value="1"/>
</dbReference>
<dbReference type="Pfam" id="PF12554">
    <property type="entry name" value="MOZART1"/>
    <property type="match status" value="1"/>
</dbReference>
<reference key="1">
    <citation type="submission" date="2004-10" db="EMBL/GenBank/DDBJ databases">
        <authorList>
            <consortium name="NIH - Xenopus Gene Collection (XGC) project"/>
        </authorList>
    </citation>
    <scope>NUCLEOTIDE SEQUENCE [LARGE SCALE MRNA]</scope>
    <source>
        <tissue>Kidney</tissue>
    </source>
</reference>
<gene>
    <name type="primary">mzt1</name>
    <name type="synonym">mozart1</name>
</gene>
<keyword id="KW-0002">3D-structure</keyword>
<keyword id="KW-0963">Cytoplasm</keyword>
<keyword id="KW-0206">Cytoskeleton</keyword>
<keyword id="KW-1185">Reference proteome</keyword>
<comment type="function">
    <text evidence="1">Required for gamma-tubulin complex recruitment to the centrosome.</text>
</comment>
<comment type="subunit">
    <text evidence="1">Part of the gamma-tubulin complex.</text>
</comment>
<comment type="subcellular location">
    <subcellularLocation>
        <location evidence="1">Cytoplasm</location>
        <location evidence="1">Cytoskeleton</location>
        <location evidence="1">Microtubule organizing center</location>
        <location evidence="1">Centrosome</location>
    </subcellularLocation>
    <subcellularLocation>
        <location evidence="1">Cytoplasm</location>
        <location evidence="1">Cytoskeleton</location>
        <location evidence="1">Spindle</location>
    </subcellularLocation>
</comment>
<comment type="similarity">
    <text evidence="2">Belongs to the MOZART1 family.</text>
</comment>
<comment type="sequence caution" evidence="2">
    <conflict type="erroneous initiation">
        <sequence resource="EMBL-CDS" id="AAH85033"/>
    </conflict>
    <text>Truncated N-terminus.</text>
</comment>
<sequence>MANASGNMSAVRETMDVLLEISRLLNTGLDMETLSICVRLCEQGINPEALSSVIKELRRASDTLKASESTAS</sequence>
<accession>Q5U4M5</accession>
<protein>
    <recommendedName>
        <fullName>Mitotic-spindle organizing protein 1</fullName>
    </recommendedName>
    <alternativeName>
        <fullName>Mitotic-spindle organizing protein associated with a ring of gamma-tubulin 1</fullName>
    </alternativeName>
</protein>